<accession>P0DJP4</accession>
<name>PA2AC_CRAPU</name>
<comment type="function">
    <text evidence="2">Snake venom phospholipase A2 (PLA2) that impairs hemostasis. It weakly inhibits ADP-induced platelet aggregation when tested on platelet rich plasma from human and rabbit blood (15-25% of inhibition at 5-10 ug of enzyme), and dose-dependently inhibits blood coagulation, possibly by inhibiting thrombin activation. Exhibits high hydrolytic activities toward L-dipalmitoyl phosphatidylcholine. PLA2 catalyzes the calcium-dependent hydrolysis of the 2-acyl groups in 3-sn-phosphoglycerides.</text>
</comment>
<comment type="catalytic activity">
    <reaction>
        <text>a 1,2-diacyl-sn-glycero-3-phosphocholine + H2O = a 1-acyl-sn-glycero-3-phosphocholine + a fatty acid + H(+)</text>
        <dbReference type="Rhea" id="RHEA:15801"/>
        <dbReference type="ChEBI" id="CHEBI:15377"/>
        <dbReference type="ChEBI" id="CHEBI:15378"/>
        <dbReference type="ChEBI" id="CHEBI:28868"/>
        <dbReference type="ChEBI" id="CHEBI:57643"/>
        <dbReference type="ChEBI" id="CHEBI:58168"/>
        <dbReference type="EC" id="3.1.1.4"/>
    </reaction>
</comment>
<comment type="cofactor">
    <cofactor evidence="1">
        <name>Ca(2+)</name>
        <dbReference type="ChEBI" id="CHEBI:29108"/>
    </cofactor>
    <text evidence="1">Binds 1 Ca(2+) ion.</text>
</comment>
<comment type="subunit">
    <text evidence="2">Monomer.</text>
</comment>
<comment type="subcellular location">
    <subcellularLocation>
        <location>Secreted</location>
    </subcellularLocation>
</comment>
<comment type="tissue specificity">
    <text>Expressed by the venom gland.</text>
</comment>
<comment type="mass spectrometry"/>
<comment type="similarity">
    <text evidence="3">Belongs to the phospholipase A2 family. Group II subfamily. D49 sub-subfamily.</text>
</comment>
<feature type="chain" id="PRO_0000419060" description="Acidic phospholipase A2 Tpu-E6c">
    <location>
        <begin position="1"/>
        <end position="122"/>
    </location>
</feature>
<feature type="active site" evidence="1">
    <location>
        <position position="47"/>
    </location>
</feature>
<feature type="active site" evidence="1">
    <location>
        <position position="89"/>
    </location>
</feature>
<feature type="binding site" evidence="1">
    <location>
        <position position="27"/>
    </location>
    <ligand>
        <name>Ca(2+)</name>
        <dbReference type="ChEBI" id="CHEBI:29108"/>
    </ligand>
</feature>
<feature type="binding site" evidence="1">
    <location>
        <position position="29"/>
    </location>
    <ligand>
        <name>Ca(2+)</name>
        <dbReference type="ChEBI" id="CHEBI:29108"/>
    </ligand>
</feature>
<feature type="binding site" evidence="1">
    <location>
        <position position="31"/>
    </location>
    <ligand>
        <name>Ca(2+)</name>
        <dbReference type="ChEBI" id="CHEBI:29108"/>
    </ligand>
</feature>
<feature type="binding site" evidence="1">
    <location>
        <position position="48"/>
    </location>
    <ligand>
        <name>Ca(2+)</name>
        <dbReference type="ChEBI" id="CHEBI:29108"/>
    </ligand>
</feature>
<feature type="disulfide bond" evidence="1">
    <location>
        <begin position="26"/>
        <end position="115"/>
    </location>
</feature>
<feature type="disulfide bond" evidence="1">
    <location>
        <begin position="28"/>
        <end position="44"/>
    </location>
</feature>
<feature type="disulfide bond" evidence="1">
    <location>
        <begin position="43"/>
        <end position="95"/>
    </location>
</feature>
<feature type="disulfide bond" evidence="1">
    <location>
        <begin position="49"/>
        <end position="122"/>
    </location>
</feature>
<feature type="disulfide bond" evidence="1">
    <location>
        <begin position="50"/>
        <end position="88"/>
    </location>
</feature>
<feature type="disulfide bond" evidence="1">
    <location>
        <begin position="57"/>
        <end position="81"/>
    </location>
</feature>
<feature type="disulfide bond" evidence="1">
    <location>
        <begin position="75"/>
        <end position="86"/>
    </location>
</feature>
<feature type="unsure residue">
    <location>
        <begin position="65"/>
        <end position="66"/>
    </location>
</feature>
<feature type="non-consecutive residues" evidence="3">
    <location>
        <begin position="23"/>
        <end position="24"/>
    </location>
</feature>
<reference key="1">
    <citation type="journal article" date="2005" name="FEBS J.">
        <title>Unusual venom phospholipases A2 of two primitive tree vipers Trimeresurus puniceus and Trimeresurus borneensis.</title>
        <authorList>
            <person name="Wang Y.-M."/>
            <person name="Peng H.-F."/>
            <person name="Tsai I.-H."/>
        </authorList>
    </citation>
    <scope>PROTEIN SEQUENCE</scope>
    <scope>FUNCTION</scope>
    <scope>SUBUNIT</scope>
    <scope>MASS SPECTROMETRY</scope>
    <source>
        <tissue>Venom</tissue>
        <tissue>Venom gland</tissue>
    </source>
</reference>
<keyword id="KW-1203">Blood coagulation cascade inhibiting toxin</keyword>
<keyword id="KW-0903">Direct protein sequencing</keyword>
<keyword id="KW-1015">Disulfide bond</keyword>
<keyword id="KW-1199">Hemostasis impairing toxin</keyword>
<keyword id="KW-0378">Hydrolase</keyword>
<keyword id="KW-0442">Lipid degradation</keyword>
<keyword id="KW-0443">Lipid metabolism</keyword>
<keyword id="KW-0479">Metal-binding</keyword>
<keyword id="KW-1201">Platelet aggregation inhibiting toxin</keyword>
<keyword id="KW-0964">Secreted</keyword>
<keyword id="KW-0800">Toxin</keyword>
<organism>
    <name type="scientific">Craspedocephalus puniceus</name>
    <name type="common">Flat-nosed pitviper</name>
    <name type="synonym">Trimeresurus puniceus</name>
    <dbReference type="NCBI Taxonomy" id="3147916"/>
    <lineage>
        <taxon>Eukaryota</taxon>
        <taxon>Metazoa</taxon>
        <taxon>Chordata</taxon>
        <taxon>Craniata</taxon>
        <taxon>Vertebrata</taxon>
        <taxon>Euteleostomi</taxon>
        <taxon>Lepidosauria</taxon>
        <taxon>Squamata</taxon>
        <taxon>Bifurcata</taxon>
        <taxon>Unidentata</taxon>
        <taxon>Episquamata</taxon>
        <taxon>Toxicofera</taxon>
        <taxon>Serpentes</taxon>
        <taxon>Colubroidea</taxon>
        <taxon>Viperidae</taxon>
        <taxon>Crotalinae</taxon>
        <taxon>Craspedocephalus</taxon>
    </lineage>
</organism>
<dbReference type="EC" id="3.1.1.4"/>
<dbReference type="SMR" id="P0DJP4"/>
<dbReference type="GO" id="GO:0005576">
    <property type="term" value="C:extracellular region"/>
    <property type="evidence" value="ECO:0007669"/>
    <property type="project" value="UniProtKB-SubCell"/>
</dbReference>
<dbReference type="GO" id="GO:0005509">
    <property type="term" value="F:calcium ion binding"/>
    <property type="evidence" value="ECO:0007669"/>
    <property type="project" value="InterPro"/>
</dbReference>
<dbReference type="GO" id="GO:0047498">
    <property type="term" value="F:calcium-dependent phospholipase A2 activity"/>
    <property type="evidence" value="ECO:0007669"/>
    <property type="project" value="TreeGrafter"/>
</dbReference>
<dbReference type="GO" id="GO:0005543">
    <property type="term" value="F:phospholipid binding"/>
    <property type="evidence" value="ECO:0007669"/>
    <property type="project" value="TreeGrafter"/>
</dbReference>
<dbReference type="GO" id="GO:0090729">
    <property type="term" value="F:toxin activity"/>
    <property type="evidence" value="ECO:0007669"/>
    <property type="project" value="UniProtKB-KW"/>
</dbReference>
<dbReference type="GO" id="GO:0050482">
    <property type="term" value="P:arachidonate secretion"/>
    <property type="evidence" value="ECO:0007669"/>
    <property type="project" value="InterPro"/>
</dbReference>
<dbReference type="GO" id="GO:0016042">
    <property type="term" value="P:lipid catabolic process"/>
    <property type="evidence" value="ECO:0007669"/>
    <property type="project" value="UniProtKB-KW"/>
</dbReference>
<dbReference type="GO" id="GO:0006644">
    <property type="term" value="P:phospholipid metabolic process"/>
    <property type="evidence" value="ECO:0007669"/>
    <property type="project" value="InterPro"/>
</dbReference>
<dbReference type="CDD" id="cd00125">
    <property type="entry name" value="PLA2c"/>
    <property type="match status" value="1"/>
</dbReference>
<dbReference type="FunFam" id="1.20.90.10:FF:000001">
    <property type="entry name" value="Basic phospholipase A2 homolog"/>
    <property type="match status" value="1"/>
</dbReference>
<dbReference type="Gene3D" id="1.20.90.10">
    <property type="entry name" value="Phospholipase A2 domain"/>
    <property type="match status" value="1"/>
</dbReference>
<dbReference type="InterPro" id="IPR001211">
    <property type="entry name" value="PLipase_A2"/>
</dbReference>
<dbReference type="InterPro" id="IPR033112">
    <property type="entry name" value="PLipase_A2_Asp_AS"/>
</dbReference>
<dbReference type="InterPro" id="IPR016090">
    <property type="entry name" value="PLipase_A2_dom"/>
</dbReference>
<dbReference type="InterPro" id="IPR036444">
    <property type="entry name" value="PLipase_A2_dom_sf"/>
</dbReference>
<dbReference type="InterPro" id="IPR033113">
    <property type="entry name" value="PLipase_A2_His_AS"/>
</dbReference>
<dbReference type="PANTHER" id="PTHR11716:SF101">
    <property type="entry name" value="BASIC PHOSPHOLIPASE A2 PA-11-LIKE"/>
    <property type="match status" value="1"/>
</dbReference>
<dbReference type="PANTHER" id="PTHR11716">
    <property type="entry name" value="PHOSPHOLIPASE A2 FAMILY MEMBER"/>
    <property type="match status" value="1"/>
</dbReference>
<dbReference type="Pfam" id="PF00068">
    <property type="entry name" value="Phospholip_A2_1"/>
    <property type="match status" value="1"/>
</dbReference>
<dbReference type="PRINTS" id="PR00389">
    <property type="entry name" value="PHPHLIPASEA2"/>
</dbReference>
<dbReference type="SMART" id="SM00085">
    <property type="entry name" value="PA2c"/>
    <property type="match status" value="1"/>
</dbReference>
<dbReference type="SUPFAM" id="SSF48619">
    <property type="entry name" value="Phospholipase A2, PLA2"/>
    <property type="match status" value="1"/>
</dbReference>
<dbReference type="PROSITE" id="PS00119">
    <property type="entry name" value="PA2_ASP"/>
    <property type="match status" value="1"/>
</dbReference>
<dbReference type="PROSITE" id="PS00118">
    <property type="entry name" value="PA2_HIS"/>
    <property type="match status" value="1"/>
</dbReference>
<sequence>NLLQFEMMILKMAGRSGIRWYSDYGCYCGKGGHGQPQDATDRCCFVHDCCYGKVSGCDPKDEFYKYSSDNNDIVCGGNNPCLKEICECDRDAAICFRDNLSTYNNKYWNVPSETCQVESEPC</sequence>
<proteinExistence type="evidence at protein level"/>
<evidence type="ECO:0000250" key="1"/>
<evidence type="ECO:0000269" key="2">
    <source>
    </source>
</evidence>
<evidence type="ECO:0000305" key="3"/>
<protein>
    <recommendedName>
        <fullName>Acidic phospholipase A2 Tpu-E6c</fullName>
        <shortName>svPLA2</shortName>
        <ecNumber>3.1.1.4</ecNumber>
    </recommendedName>
    <alternativeName>
        <fullName>Phosphatidylcholine 2-acylhydrolase</fullName>
    </alternativeName>
</protein>